<organism>
    <name type="scientific">Staphylococcus haemolyticus (strain JCSC1435)</name>
    <dbReference type="NCBI Taxonomy" id="279808"/>
    <lineage>
        <taxon>Bacteria</taxon>
        <taxon>Bacillati</taxon>
        <taxon>Bacillota</taxon>
        <taxon>Bacilli</taxon>
        <taxon>Bacillales</taxon>
        <taxon>Staphylococcaceae</taxon>
        <taxon>Staphylococcus</taxon>
    </lineage>
</organism>
<dbReference type="EC" id="3.2.2.9" evidence="1"/>
<dbReference type="EMBL" id="AP006716">
    <property type="protein sequence ID" value="BAE04625.1"/>
    <property type="status" value="ALT_INIT"/>
    <property type="molecule type" value="Genomic_DNA"/>
</dbReference>
<dbReference type="RefSeq" id="WP_041615146.1">
    <property type="nucleotide sequence ID" value="NC_007168.1"/>
</dbReference>
<dbReference type="SMR" id="Q4L6V0"/>
<dbReference type="KEGG" id="sha:SH1316"/>
<dbReference type="eggNOG" id="COG0775">
    <property type="taxonomic scope" value="Bacteria"/>
</dbReference>
<dbReference type="HOGENOM" id="CLU_031248_2_2_9"/>
<dbReference type="OrthoDB" id="9792278at2"/>
<dbReference type="UniPathway" id="UPA00904">
    <property type="reaction ID" value="UER00871"/>
</dbReference>
<dbReference type="Proteomes" id="UP000000543">
    <property type="component" value="Chromosome"/>
</dbReference>
<dbReference type="GO" id="GO:0005829">
    <property type="term" value="C:cytosol"/>
    <property type="evidence" value="ECO:0007669"/>
    <property type="project" value="TreeGrafter"/>
</dbReference>
<dbReference type="GO" id="GO:0008782">
    <property type="term" value="F:adenosylhomocysteine nucleosidase activity"/>
    <property type="evidence" value="ECO:0007669"/>
    <property type="project" value="UniProtKB-UniRule"/>
</dbReference>
<dbReference type="GO" id="GO:0008930">
    <property type="term" value="F:methylthioadenosine nucleosidase activity"/>
    <property type="evidence" value="ECO:0007669"/>
    <property type="project" value="UniProtKB-UniRule"/>
</dbReference>
<dbReference type="GO" id="GO:0019509">
    <property type="term" value="P:L-methionine salvage from methylthioadenosine"/>
    <property type="evidence" value="ECO:0007669"/>
    <property type="project" value="UniProtKB-UniRule"/>
</dbReference>
<dbReference type="GO" id="GO:0019284">
    <property type="term" value="P:L-methionine salvage from S-adenosylmethionine"/>
    <property type="evidence" value="ECO:0007669"/>
    <property type="project" value="TreeGrafter"/>
</dbReference>
<dbReference type="GO" id="GO:0009164">
    <property type="term" value="P:nucleoside catabolic process"/>
    <property type="evidence" value="ECO:0007669"/>
    <property type="project" value="InterPro"/>
</dbReference>
<dbReference type="CDD" id="cd09008">
    <property type="entry name" value="MTAN"/>
    <property type="match status" value="1"/>
</dbReference>
<dbReference type="FunFam" id="3.40.50.1580:FF:000001">
    <property type="entry name" value="MTA/SAH nucleosidase family protein"/>
    <property type="match status" value="1"/>
</dbReference>
<dbReference type="Gene3D" id="3.40.50.1580">
    <property type="entry name" value="Nucleoside phosphorylase domain"/>
    <property type="match status" value="1"/>
</dbReference>
<dbReference type="HAMAP" id="MF_01684">
    <property type="entry name" value="Salvage_MtnN"/>
    <property type="match status" value="1"/>
</dbReference>
<dbReference type="InterPro" id="IPR010049">
    <property type="entry name" value="MTA_SAH_Nsdase"/>
</dbReference>
<dbReference type="InterPro" id="IPR000845">
    <property type="entry name" value="Nucleoside_phosphorylase_d"/>
</dbReference>
<dbReference type="InterPro" id="IPR035994">
    <property type="entry name" value="Nucleoside_phosphorylase_sf"/>
</dbReference>
<dbReference type="NCBIfam" id="TIGR01704">
    <property type="entry name" value="MTA_SAH-Nsdase"/>
    <property type="match status" value="1"/>
</dbReference>
<dbReference type="NCBIfam" id="NF004079">
    <property type="entry name" value="PRK05584.1"/>
    <property type="match status" value="1"/>
</dbReference>
<dbReference type="PANTHER" id="PTHR46832">
    <property type="entry name" value="5'-METHYLTHIOADENOSINE/S-ADENOSYLHOMOCYSTEINE NUCLEOSIDASE"/>
    <property type="match status" value="1"/>
</dbReference>
<dbReference type="PANTHER" id="PTHR46832:SF1">
    <property type="entry name" value="5'-METHYLTHIOADENOSINE_S-ADENOSYLHOMOCYSTEINE NUCLEOSIDASE"/>
    <property type="match status" value="1"/>
</dbReference>
<dbReference type="Pfam" id="PF01048">
    <property type="entry name" value="PNP_UDP_1"/>
    <property type="match status" value="1"/>
</dbReference>
<dbReference type="SUPFAM" id="SSF53167">
    <property type="entry name" value="Purine and uridine phosphorylases"/>
    <property type="match status" value="1"/>
</dbReference>
<accession>Q4L6V0</accession>
<gene>
    <name evidence="1" type="primary">mtnN</name>
    <name type="ordered locus">SH1316</name>
</gene>
<evidence type="ECO:0000255" key="1">
    <source>
        <dbReference type="HAMAP-Rule" id="MF_01684"/>
    </source>
</evidence>
<evidence type="ECO:0000305" key="2"/>
<protein>
    <recommendedName>
        <fullName evidence="1">5'-methylthioadenosine/S-adenosylhomocysteine nucleosidase</fullName>
        <shortName evidence="1">MTA/SAH nucleosidase</shortName>
        <shortName evidence="1">MTAN</shortName>
        <ecNumber evidence="1">3.2.2.9</ecNumber>
    </recommendedName>
    <alternativeName>
        <fullName evidence="1">5'-deoxyadenosine nucleosidase</fullName>
        <shortName evidence="1">DOA nucleosidase</shortName>
        <shortName evidence="1">dAdo nucleosidase</shortName>
    </alternativeName>
    <alternativeName>
        <fullName evidence="1">5'-methylthioadenosine nucleosidase</fullName>
        <shortName evidence="1">MTA nucleosidase</shortName>
    </alternativeName>
    <alternativeName>
        <fullName evidence="1">S-adenosylhomocysteine nucleosidase</fullName>
        <shortName evidence="1">AdoHcy nucleosidase</shortName>
        <shortName evidence="1">SAH nucleosidase</shortName>
        <shortName evidence="1">SRH nucleosidase</shortName>
    </alternativeName>
</protein>
<reference key="1">
    <citation type="journal article" date="2005" name="J. Bacteriol.">
        <title>Whole-genome sequencing of Staphylococcus haemolyticus uncovers the extreme plasticity of its genome and the evolution of human-colonizing staphylococcal species.</title>
        <authorList>
            <person name="Takeuchi F."/>
            <person name="Watanabe S."/>
            <person name="Baba T."/>
            <person name="Yuzawa H."/>
            <person name="Ito T."/>
            <person name="Morimoto Y."/>
            <person name="Kuroda M."/>
            <person name="Cui L."/>
            <person name="Takahashi M."/>
            <person name="Ankai A."/>
            <person name="Baba S."/>
            <person name="Fukui S."/>
            <person name="Lee J.C."/>
            <person name="Hiramatsu K."/>
        </authorList>
    </citation>
    <scope>NUCLEOTIDE SEQUENCE [LARGE SCALE GENOMIC DNA]</scope>
    <source>
        <strain>JCSC1435</strain>
    </source>
</reference>
<comment type="function">
    <text evidence="1">Catalyzes the irreversible cleavage of the glycosidic bond in both 5'-methylthioadenosine (MTA) and S-adenosylhomocysteine (SAH/AdoHcy) to adenine and the corresponding thioribose, 5'-methylthioribose and S-ribosylhomocysteine, respectively. Also cleaves 5'-deoxyadenosine, a toxic by-product of radical S-adenosylmethionine (SAM) enzymes, into 5-deoxyribose and adenine.</text>
</comment>
<comment type="catalytic activity">
    <reaction evidence="1">
        <text>S-adenosyl-L-homocysteine + H2O = S-(5-deoxy-D-ribos-5-yl)-L-homocysteine + adenine</text>
        <dbReference type="Rhea" id="RHEA:17805"/>
        <dbReference type="ChEBI" id="CHEBI:15377"/>
        <dbReference type="ChEBI" id="CHEBI:16708"/>
        <dbReference type="ChEBI" id="CHEBI:57856"/>
        <dbReference type="ChEBI" id="CHEBI:58195"/>
        <dbReference type="EC" id="3.2.2.9"/>
    </reaction>
</comment>
<comment type="catalytic activity">
    <reaction evidence="1">
        <text>S-methyl-5'-thioadenosine + H2O = 5-(methylsulfanyl)-D-ribose + adenine</text>
        <dbReference type="Rhea" id="RHEA:13617"/>
        <dbReference type="ChEBI" id="CHEBI:15377"/>
        <dbReference type="ChEBI" id="CHEBI:16708"/>
        <dbReference type="ChEBI" id="CHEBI:17509"/>
        <dbReference type="ChEBI" id="CHEBI:78440"/>
        <dbReference type="EC" id="3.2.2.9"/>
    </reaction>
</comment>
<comment type="catalytic activity">
    <reaction evidence="1">
        <text>5'-deoxyadenosine + H2O = 5-deoxy-D-ribose + adenine</text>
        <dbReference type="Rhea" id="RHEA:29859"/>
        <dbReference type="ChEBI" id="CHEBI:15377"/>
        <dbReference type="ChEBI" id="CHEBI:16708"/>
        <dbReference type="ChEBI" id="CHEBI:17319"/>
        <dbReference type="ChEBI" id="CHEBI:149540"/>
        <dbReference type="EC" id="3.2.2.9"/>
    </reaction>
    <physiologicalReaction direction="left-to-right" evidence="1">
        <dbReference type="Rhea" id="RHEA:29860"/>
    </physiologicalReaction>
</comment>
<comment type="pathway">
    <text evidence="1">Amino-acid biosynthesis; L-methionine biosynthesis via salvage pathway; S-methyl-5-thio-alpha-D-ribose 1-phosphate from S-methyl-5'-thioadenosine (hydrolase route): step 1/2.</text>
</comment>
<comment type="similarity">
    <text evidence="1">Belongs to the PNP/UDP phosphorylase family. MtnN subfamily.</text>
</comment>
<comment type="sequence caution" evidence="2">
    <conflict type="erroneous initiation">
        <sequence resource="EMBL-CDS" id="BAE04625"/>
    </conflict>
</comment>
<sequence length="228" mass="24754">MIGIIGAMEEEVAILKDKLTDMNEISVAHVKFYRGKLNSKEVVLTQSGIGKVNAAISTTLIIEKFNPKLIINTGSAGALDESLSVGDMLISNDVVYHDVDATAFGYKLGQIPQMPLEFKSDQELLKSVETVINKKNYNAKIGQIVSGDSFIGSVDQRLTIKRQFPEAMAVEMEATAIAQTCHQFHVPFIVTRAVSDLANGKADISFEEFLGEAAKSSSSIVESLIKVL</sequence>
<name>MTNN_STAHJ</name>
<proteinExistence type="inferred from homology"/>
<keyword id="KW-0028">Amino-acid biosynthesis</keyword>
<keyword id="KW-0378">Hydrolase</keyword>
<keyword id="KW-0486">Methionine biosynthesis</keyword>
<feature type="chain" id="PRO_0000359378" description="5'-methylthioadenosine/S-adenosylhomocysteine nucleosidase">
    <location>
        <begin position="1"/>
        <end position="228"/>
    </location>
</feature>
<feature type="active site" description="Proton acceptor" evidence="1">
    <location>
        <position position="11"/>
    </location>
</feature>
<feature type="active site" description="Proton donor" evidence="1">
    <location>
        <position position="196"/>
    </location>
</feature>
<feature type="binding site" evidence="1">
    <location>
        <position position="77"/>
    </location>
    <ligand>
        <name>substrate</name>
    </ligand>
</feature>
<feature type="binding site" evidence="1">
    <location>
        <position position="151"/>
    </location>
    <ligand>
        <name>substrate</name>
    </ligand>
</feature>
<feature type="binding site" evidence="1">
    <location>
        <begin position="172"/>
        <end position="173"/>
    </location>
    <ligand>
        <name>substrate</name>
    </ligand>
</feature>